<dbReference type="EC" id="2.4.1.332" evidence="1 2"/>
<dbReference type="EMBL" id="CP001791">
    <property type="protein sequence ID" value="ADI00307.1"/>
    <property type="molecule type" value="Genomic_DNA"/>
</dbReference>
<dbReference type="RefSeq" id="WP_013173720.1">
    <property type="nucleotide sequence ID" value="NC_014219.1"/>
</dbReference>
<dbReference type="PDB" id="4KTP">
    <property type="method" value="X-ray"/>
    <property type="resolution" value="1.90 A"/>
    <property type="chains" value="A/B=1-761"/>
</dbReference>
<dbReference type="PDB" id="4KTR">
    <property type="method" value="X-ray"/>
    <property type="resolution" value="2.30 A"/>
    <property type="chains" value="A/B/C/D/E/F/G/H=1-761"/>
</dbReference>
<dbReference type="PDBsum" id="4KTP"/>
<dbReference type="PDBsum" id="4KTR"/>
<dbReference type="SMR" id="D6XZ22"/>
<dbReference type="STRING" id="439292.Bsel_2816"/>
<dbReference type="CAZy" id="GH65">
    <property type="family name" value="Glycoside Hydrolase Family 65"/>
</dbReference>
<dbReference type="KEGG" id="bse:Bsel_2816"/>
<dbReference type="eggNOG" id="COG1554">
    <property type="taxonomic scope" value="Bacteria"/>
</dbReference>
<dbReference type="HOGENOM" id="CLU_006285_2_1_9"/>
<dbReference type="BRENDA" id="2.4.1.332">
    <property type="organism ID" value="13105"/>
</dbReference>
<dbReference type="EvolutionaryTrace" id="D6XZ22"/>
<dbReference type="Proteomes" id="UP000000271">
    <property type="component" value="Chromosome"/>
</dbReference>
<dbReference type="GO" id="GO:0030246">
    <property type="term" value="F:carbohydrate binding"/>
    <property type="evidence" value="ECO:0007669"/>
    <property type="project" value="InterPro"/>
</dbReference>
<dbReference type="GO" id="GO:0016757">
    <property type="term" value="F:glycosyltransferase activity"/>
    <property type="evidence" value="ECO:0007669"/>
    <property type="project" value="UniProtKB-KW"/>
</dbReference>
<dbReference type="GO" id="GO:0004553">
    <property type="term" value="F:hydrolase activity, hydrolyzing O-glycosyl compounds"/>
    <property type="evidence" value="ECO:0007669"/>
    <property type="project" value="TreeGrafter"/>
</dbReference>
<dbReference type="GO" id="GO:0046872">
    <property type="term" value="F:metal ion binding"/>
    <property type="evidence" value="ECO:0007669"/>
    <property type="project" value="UniProtKB-KW"/>
</dbReference>
<dbReference type="GO" id="GO:0005975">
    <property type="term" value="P:carbohydrate metabolic process"/>
    <property type="evidence" value="ECO:0007669"/>
    <property type="project" value="InterPro"/>
</dbReference>
<dbReference type="Gene3D" id="1.50.10.10">
    <property type="match status" value="1"/>
</dbReference>
<dbReference type="Gene3D" id="2.70.98.40">
    <property type="entry name" value="Glycoside hydrolase, family 65, N-terminal domain"/>
    <property type="match status" value="1"/>
</dbReference>
<dbReference type="Gene3D" id="2.60.420.10">
    <property type="entry name" value="Maltose phosphorylase, domain 3"/>
    <property type="match status" value="1"/>
</dbReference>
<dbReference type="InterPro" id="IPR008928">
    <property type="entry name" value="6-hairpin_glycosidase_sf"/>
</dbReference>
<dbReference type="InterPro" id="IPR012341">
    <property type="entry name" value="6hp_glycosidase-like_sf"/>
</dbReference>
<dbReference type="InterPro" id="IPR011013">
    <property type="entry name" value="Gal_mutarotase_sf_dom"/>
</dbReference>
<dbReference type="InterPro" id="IPR005194">
    <property type="entry name" value="Glyco_hydro_65_C"/>
</dbReference>
<dbReference type="InterPro" id="IPR005195">
    <property type="entry name" value="Glyco_hydro_65_M"/>
</dbReference>
<dbReference type="InterPro" id="IPR005196">
    <property type="entry name" value="Glyco_hydro_65_N"/>
</dbReference>
<dbReference type="InterPro" id="IPR037018">
    <property type="entry name" value="Glyco_hydro_65_N_sf"/>
</dbReference>
<dbReference type="InterPro" id="IPR017045">
    <property type="entry name" value="Malt_Pase/Glycosyl_Hdrlase"/>
</dbReference>
<dbReference type="PANTHER" id="PTHR11051">
    <property type="entry name" value="GLYCOSYL HYDROLASE-RELATED"/>
    <property type="match status" value="1"/>
</dbReference>
<dbReference type="PANTHER" id="PTHR11051:SF8">
    <property type="entry name" value="PROTEIN-GLUCOSYLGALACTOSYLHYDROXYLYSINE GLUCOSIDASE"/>
    <property type="match status" value="1"/>
</dbReference>
<dbReference type="Pfam" id="PF03633">
    <property type="entry name" value="Glyco_hydro_65C"/>
    <property type="match status" value="1"/>
</dbReference>
<dbReference type="Pfam" id="PF03632">
    <property type="entry name" value="Glyco_hydro_65m"/>
    <property type="match status" value="1"/>
</dbReference>
<dbReference type="Pfam" id="PF03636">
    <property type="entry name" value="Glyco_hydro_65N"/>
    <property type="match status" value="1"/>
</dbReference>
<dbReference type="PIRSF" id="PIRSF036289">
    <property type="entry name" value="Glycosyl_hydrolase_malt_phosph"/>
    <property type="match status" value="1"/>
</dbReference>
<dbReference type="SUPFAM" id="SSF74650">
    <property type="entry name" value="Galactose mutarotase-like"/>
    <property type="match status" value="1"/>
</dbReference>
<dbReference type="SUPFAM" id="SSF48208">
    <property type="entry name" value="Six-hairpin glycosidases"/>
    <property type="match status" value="1"/>
</dbReference>
<keyword id="KW-0002">3D-structure</keyword>
<keyword id="KW-0328">Glycosyltransferase</keyword>
<keyword id="KW-0479">Metal-binding</keyword>
<keyword id="KW-0808">Transferase</keyword>
<proteinExistence type="evidence at protein level"/>
<organism>
    <name type="scientific">Bacillus selenitireducens (strain ATCC 700615 / DSM 15326 / MLS10)</name>
    <dbReference type="NCBI Taxonomy" id="439292"/>
    <lineage>
        <taxon>Bacteria</taxon>
        <taxon>Bacillati</taxon>
        <taxon>Bacillota</taxon>
        <taxon>Bacilli</taxon>
        <taxon>Bacillales</taxon>
        <taxon>Bacillaceae</taxon>
        <taxon>Salisediminibacterium</taxon>
    </lineage>
</organism>
<name>GGP_BACIE</name>
<sequence>MHEIGEHLTTNTGWDIIKNRYEAAQAITEGSNFMIGNGFMGYRGTFAEDGKDAYAACIVTDTWDKADGKWEELSTVPNALLTLLHVDGEPFIMSEEAASFERTLDLSQGVTSRKVSQRMKNGATITIHEEKFASYRKKHAVLMKYTVESDQDTDAVLDTGIDYDVWSINGDHLQGHHYFSHPTGDGVTAKTVSYEDTVTVVETCSLDADASEEDYQNPDGSGRTFSLSLEAGKPVTLEKAMIIYSSNDVDNPQDEALLEAKHMQSYEEEKAANRLEWDNLWSHYDVTIQNNIIDQVALRFNIYHAIIATPVHKSLPIGARGLSCQAYQGAAFWDQEIYNMPMYLYSNPEIARNILKYRHRTLDGARRKAKRLGYEGAYYAWISGKTGDELCPDFFFKDVLSGRDIRNHFNDWQIHISPDIAYAVKKYHQVTGDDAFIRDYGAEMIFEIARFLASHAVYKPMRGRYEFMRVQGPDEYHENVDNNAFTNHQAMFTLQAADELLQTLDEKTLSAVKEKIGLSDDEISLWRDMLANTYVPKPDKHGIIEQFDGYYDLETIIPAKKVTERLIKEDEYYGYPNGVTVRTQCIKQADVIQLFVLHPHLYDRKTVELNYEFYEPRTLHFSSLSPSSYAIVAAQIDKVEEAYRNFRKSVMIDLLNTNEAVSGGTFIGGIHTAANGASWQMVVNGFGGLSVHGDDIHLSPRLPDAWDGYTFKAIVKGQTLEVDVTKEQITITNKSEDRKPLTLHIFGEKSVLDSERITKSR</sequence>
<accession>D6XZ22</accession>
<gene>
    <name evidence="6" type="ordered locus">Bsel_2816</name>
</gene>
<reference key="1">
    <citation type="submission" date="2009-10" db="EMBL/GenBank/DDBJ databases">
        <title>Complete sequence of Bacillus selenitireducens MLS10.</title>
        <authorList>
            <consortium name="US DOE Joint Genome Institute"/>
            <person name="Lucas S."/>
            <person name="Copeland A."/>
            <person name="Lapidus A."/>
            <person name="Glavina del Rio T."/>
            <person name="Dalin E."/>
            <person name="Tice H."/>
            <person name="Bruce D."/>
            <person name="Goodwin L."/>
            <person name="Pitluck S."/>
            <person name="Sims D."/>
            <person name="Brettin T."/>
            <person name="Detter J.C."/>
            <person name="Han C."/>
            <person name="Larimer F."/>
            <person name="Land M."/>
            <person name="Hauser L."/>
            <person name="Kyrpides N."/>
            <person name="Ovchinnikova G."/>
            <person name="Stolz J."/>
        </authorList>
    </citation>
    <scope>NUCLEOTIDE SEQUENCE [LARGE SCALE GENOMIC DNA]</scope>
    <source>
        <strain evidence="7">ATCC 700615 / DSM 15326 / MLS10</strain>
    </source>
</reference>
<reference key="2">
    <citation type="journal article" date="2014" name="PLoS ONE">
        <title>2-O-alpha-D-glucosylglycerol phosphorylase from Bacillus selenitireducens MLS10 possessing hydrolytic activity on beta-D-glucose 1-phosphate.</title>
        <authorList>
            <person name="Nihira T."/>
            <person name="Saito Y."/>
            <person name="Ohtsubo K."/>
            <person name="Nakai H."/>
            <person name="Kitaoka M."/>
        </authorList>
    </citation>
    <scope>FUNCTION</scope>
    <scope>CATALYTIC ACTIVITY</scope>
    <scope>SUBUNIT</scope>
    <scope>BIOPHYSICOCHEMICAL PROPERTIES</scope>
    <scope>MUTAGENESIS OF GLU-475</scope>
</reference>
<reference evidence="8 9" key="3">
    <citation type="journal article" date="2014" name="J. Biol. Chem.">
        <title>Structural basis for reversible phosphorolysis and hydrolysis reactions of 2-O-alpha-glucosylglycerol phosphorylase.</title>
        <authorList>
            <person name="Touhara K.K."/>
            <person name="Nihira T."/>
            <person name="Kitaoka M."/>
            <person name="Nakai H."/>
            <person name="Fushinobu S."/>
        </authorList>
    </citation>
    <scope>X-RAY CRYSTALLOGRAPHY (1.90 ANGSTROMS) IN COMPLEX WITH BETA-D-GLUCOSE AND GLYCEROL</scope>
    <scope>FUNCTION</scope>
    <scope>CATALYTIC ACTIVITY</scope>
    <scope>SUBUNIT</scope>
    <scope>ACTIVE SITE</scope>
    <scope>MUTAGENESIS OF TYR-327; TRP-381; TYR-572 AND LYS-587</scope>
</reference>
<evidence type="ECO:0000269" key="1">
    <source>
    </source>
</evidence>
<evidence type="ECO:0000269" key="2">
    <source>
    </source>
</evidence>
<evidence type="ECO:0000303" key="3">
    <source>
    </source>
</evidence>
<evidence type="ECO:0000305" key="4"/>
<evidence type="ECO:0000305" key="5">
    <source>
    </source>
</evidence>
<evidence type="ECO:0000312" key="6">
    <source>
        <dbReference type="EMBL" id="ADI00307.1"/>
    </source>
</evidence>
<evidence type="ECO:0000312" key="7">
    <source>
        <dbReference type="Proteomes" id="UP000000271"/>
    </source>
</evidence>
<evidence type="ECO:0007744" key="8">
    <source>
        <dbReference type="PDB" id="4KTP"/>
    </source>
</evidence>
<evidence type="ECO:0007744" key="9">
    <source>
        <dbReference type="PDB" id="4KTR"/>
    </source>
</evidence>
<evidence type="ECO:0007829" key="10">
    <source>
        <dbReference type="PDB" id="4KTP"/>
    </source>
</evidence>
<feature type="chain" id="PRO_0000432712" description="1,2-alpha-glucosylglycerol phosphorylase">
    <location>
        <begin position="1"/>
        <end position="761"/>
    </location>
</feature>
<feature type="active site" description="Proton donor" evidence="5">
    <location>
        <position position="475"/>
    </location>
</feature>
<feature type="binding site" evidence="2 9">
    <location>
        <begin position="327"/>
        <end position="328"/>
    </location>
    <ligand>
        <name>glycerol</name>
        <dbReference type="ChEBI" id="CHEBI:17754"/>
    </ligand>
</feature>
<feature type="binding site" evidence="2 8">
    <location>
        <begin position="333"/>
        <end position="334"/>
    </location>
    <ligand>
        <name>substrate</name>
    </ligand>
</feature>
<feature type="binding site" evidence="2 8">
    <location>
        <begin position="587"/>
        <end position="588"/>
    </location>
    <ligand>
        <name>substrate</name>
    </ligand>
</feature>
<feature type="mutagenesis site" description="Abolishes both phosphorylase and hydrolase activities." evidence="2">
    <original>Y</original>
    <variation>F</variation>
    <location>
        <position position="327"/>
    </location>
</feature>
<feature type="mutagenesis site" description="Impaired phosphorylase activity without affecting the hydrolase activity." evidence="2">
    <original>W</original>
    <variation>F</variation>
    <location>
        <position position="381"/>
    </location>
</feature>
<feature type="mutagenesis site" description="Loss of function." evidence="1">
    <original>E</original>
    <variation>A</variation>
    <variation>Q</variation>
    <location>
        <position position="475"/>
    </location>
</feature>
<feature type="mutagenesis site" description="Impairs both phosphorylase and hydrolase activities." evidence="2">
    <original>Y</original>
    <variation>F</variation>
    <location>
        <position position="572"/>
    </location>
</feature>
<feature type="mutagenesis site" description="Abolishes both phosphorylase and hydrolase activities." evidence="2">
    <original>K</original>
    <variation>A</variation>
    <location>
        <position position="587"/>
    </location>
</feature>
<feature type="strand" evidence="10">
    <location>
        <begin position="3"/>
        <end position="5"/>
    </location>
</feature>
<feature type="strand" evidence="10">
    <location>
        <begin position="11"/>
        <end position="18"/>
    </location>
</feature>
<feature type="helix" evidence="10">
    <location>
        <begin position="23"/>
        <end position="25"/>
    </location>
</feature>
<feature type="helix" evidence="10">
    <location>
        <begin position="26"/>
        <end position="32"/>
    </location>
</feature>
<feature type="strand" evidence="10">
    <location>
        <begin position="38"/>
        <end position="42"/>
    </location>
</feature>
<feature type="helix" evidence="10">
    <location>
        <begin position="51"/>
        <end position="53"/>
    </location>
</feature>
<feature type="strand" evidence="10">
    <location>
        <begin position="57"/>
        <end position="59"/>
    </location>
</feature>
<feature type="strand" evidence="10">
    <location>
        <begin position="78"/>
        <end position="86"/>
    </location>
</feature>
<feature type="strand" evidence="10">
    <location>
        <begin position="98"/>
        <end position="105"/>
    </location>
</feature>
<feature type="turn" evidence="10">
    <location>
        <begin position="106"/>
        <end position="109"/>
    </location>
</feature>
<feature type="strand" evidence="10">
    <location>
        <begin position="110"/>
        <end position="118"/>
    </location>
</feature>
<feature type="strand" evidence="10">
    <location>
        <begin position="124"/>
        <end position="133"/>
    </location>
</feature>
<feature type="strand" evidence="10">
    <location>
        <begin position="135"/>
        <end position="137"/>
    </location>
</feature>
<feature type="strand" evidence="10">
    <location>
        <begin position="140"/>
        <end position="151"/>
    </location>
</feature>
<feature type="strand" evidence="10">
    <location>
        <begin position="153"/>
        <end position="162"/>
    </location>
</feature>
<feature type="strand" evidence="10">
    <location>
        <begin position="173"/>
        <end position="181"/>
    </location>
</feature>
<feature type="strand" evidence="10">
    <location>
        <begin position="184"/>
        <end position="191"/>
    </location>
</feature>
<feature type="turn" evidence="10">
    <location>
        <begin position="192"/>
        <end position="194"/>
    </location>
</feature>
<feature type="strand" evidence="10">
    <location>
        <begin position="197"/>
        <end position="208"/>
    </location>
</feature>
<feature type="strand" evidence="10">
    <location>
        <begin position="213"/>
        <end position="217"/>
    </location>
</feature>
<feature type="strand" evidence="10">
    <location>
        <begin position="220"/>
        <end position="229"/>
    </location>
</feature>
<feature type="strand" evidence="10">
    <location>
        <begin position="235"/>
        <end position="245"/>
    </location>
</feature>
<feature type="turn" evidence="10">
    <location>
        <begin position="246"/>
        <end position="248"/>
    </location>
</feature>
<feature type="helix" evidence="10">
    <location>
        <begin position="252"/>
        <end position="261"/>
    </location>
</feature>
<feature type="helix" evidence="10">
    <location>
        <begin position="266"/>
        <end position="284"/>
    </location>
</feature>
<feature type="strand" evidence="10">
    <location>
        <begin position="287"/>
        <end position="289"/>
    </location>
</feature>
<feature type="helix" evidence="10">
    <location>
        <begin position="292"/>
        <end position="308"/>
    </location>
</feature>
<feature type="strand" evidence="10">
    <location>
        <begin position="312"/>
        <end position="314"/>
    </location>
</feature>
<feature type="turn" evidence="10">
    <location>
        <begin position="319"/>
        <end position="322"/>
    </location>
</feature>
<feature type="strand" evidence="10">
    <location>
        <begin position="323"/>
        <end position="325"/>
    </location>
</feature>
<feature type="helix" evidence="10">
    <location>
        <begin position="326"/>
        <end position="329"/>
    </location>
</feature>
<feature type="helix" evidence="10">
    <location>
        <begin position="334"/>
        <end position="337"/>
    </location>
</feature>
<feature type="helix" evidence="10">
    <location>
        <begin position="340"/>
        <end position="346"/>
    </location>
</feature>
<feature type="helix" evidence="10">
    <location>
        <begin position="348"/>
        <end position="360"/>
    </location>
</feature>
<feature type="helix" evidence="10">
    <location>
        <begin position="362"/>
        <end position="371"/>
    </location>
</feature>
<feature type="strand" evidence="10">
    <location>
        <begin position="381"/>
        <end position="383"/>
    </location>
</feature>
<feature type="strand" evidence="10">
    <location>
        <begin position="385"/>
        <end position="389"/>
    </location>
</feature>
<feature type="turn" evidence="10">
    <location>
        <begin position="399"/>
        <end position="401"/>
    </location>
</feature>
<feature type="turn" evidence="10">
    <location>
        <begin position="409"/>
        <end position="411"/>
    </location>
</feature>
<feature type="helix" evidence="10">
    <location>
        <begin position="416"/>
        <end position="431"/>
    </location>
</feature>
<feature type="helix" evidence="10">
    <location>
        <begin position="434"/>
        <end position="439"/>
    </location>
</feature>
<feature type="helix" evidence="10">
    <location>
        <begin position="441"/>
        <end position="455"/>
    </location>
</feature>
<feature type="strand" evidence="10">
    <location>
        <begin position="457"/>
        <end position="459"/>
    </location>
</feature>
<feature type="helix" evidence="10">
    <location>
        <begin position="460"/>
        <end position="462"/>
    </location>
</feature>
<feature type="strand" evidence="10">
    <location>
        <begin position="464"/>
        <end position="466"/>
    </location>
</feature>
<feature type="strand" evidence="10">
    <location>
        <begin position="479"/>
        <end position="482"/>
    </location>
</feature>
<feature type="helix" evidence="10">
    <location>
        <begin position="484"/>
        <end position="503"/>
    </location>
</feature>
<feature type="helix" evidence="10">
    <location>
        <begin position="506"/>
        <end position="516"/>
    </location>
</feature>
<feature type="helix" evidence="10">
    <location>
        <begin position="520"/>
        <end position="532"/>
    </location>
</feature>
<feature type="helix" evidence="10">
    <location>
        <begin position="550"/>
        <end position="552"/>
    </location>
</feature>
<feature type="helix" evidence="10">
    <location>
        <begin position="559"/>
        <end position="565"/>
    </location>
</feature>
<feature type="turn" evidence="10">
    <location>
        <begin position="575"/>
        <end position="577"/>
    </location>
</feature>
<feature type="turn" evidence="10">
    <location>
        <begin position="579"/>
        <end position="582"/>
    </location>
</feature>
<feature type="strand" evidence="10">
    <location>
        <begin position="586"/>
        <end position="588"/>
    </location>
</feature>
<feature type="helix" evidence="10">
    <location>
        <begin position="591"/>
        <end position="597"/>
    </location>
</feature>
<feature type="helix" evidence="10">
    <location>
        <begin position="604"/>
        <end position="614"/>
    </location>
</feature>
<feature type="helix" evidence="10">
    <location>
        <begin position="615"/>
        <end position="617"/>
    </location>
</feature>
<feature type="helix" evidence="10">
    <location>
        <begin position="625"/>
        <end position="635"/>
    </location>
</feature>
<feature type="helix" evidence="10">
    <location>
        <begin position="639"/>
        <end position="650"/>
    </location>
</feature>
<feature type="turn" evidence="10">
    <location>
        <begin position="651"/>
        <end position="656"/>
    </location>
</feature>
<feature type="strand" evidence="10">
    <location>
        <begin position="660"/>
        <end position="662"/>
    </location>
</feature>
<feature type="helix" evidence="10">
    <location>
        <begin position="672"/>
        <end position="683"/>
    </location>
</feature>
<feature type="turn" evidence="10">
    <location>
        <begin position="684"/>
        <end position="686"/>
    </location>
</feature>
<feature type="strand" evidence="10">
    <location>
        <begin position="690"/>
        <end position="692"/>
    </location>
</feature>
<feature type="strand" evidence="10">
    <location>
        <begin position="695"/>
        <end position="698"/>
    </location>
</feature>
<feature type="strand" evidence="10">
    <location>
        <begin position="707"/>
        <end position="715"/>
    </location>
</feature>
<feature type="strand" evidence="10">
    <location>
        <begin position="718"/>
        <end position="733"/>
    </location>
</feature>
<feature type="strand" evidence="10">
    <location>
        <begin position="741"/>
        <end position="745"/>
    </location>
</feature>
<feature type="strand" evidence="10">
    <location>
        <begin position="748"/>
        <end position="752"/>
    </location>
</feature>
<feature type="strand" evidence="10">
    <location>
        <begin position="754"/>
        <end position="760"/>
    </location>
</feature>
<protein>
    <recommendedName>
        <fullName evidence="4">1,2-alpha-glucosylglycerol phosphorylase</fullName>
        <ecNumber evidence="1 2">2.4.1.332</ecNumber>
    </recommendedName>
    <alternativeName>
        <fullName evidence="3">2-O-alpha-glucosylglycerol phosphorylase</fullName>
        <shortName evidence="3">GGP</shortName>
    </alternativeName>
</protein>
<comment type="function">
    <text evidence="1 2">Catalyzes both the (1) reversible phosphorolysis of 2-O-alpha-D-glucopyranosyl-sn-glycerol (GG) from beta-D-glucose 1-phosphate (betaGlc1P) and glycerol and (2) the hydrolysis of betaGlc1P. the betaGlc1P hydrolysis is a glucosyl-transfer reaction to an acceptor water molecule that produces an anomer-inverted alpha-glucose, not a phosphatase-type reaction. In the absence of glycerol produces alpha-D-glucopyranose and phosphate from beta-D-glucopyranose 1-phosphate.</text>
</comment>
<comment type="catalytic activity">
    <reaction evidence="1 2">
        <text>2-O-(alpha-D-glucopyranosyl)glycerol + phosphate = beta-D-glucose 1-phosphate + glycerol</text>
        <dbReference type="Rhea" id="RHEA:43060"/>
        <dbReference type="ChEBI" id="CHEBI:17754"/>
        <dbReference type="ChEBI" id="CHEBI:43474"/>
        <dbReference type="ChEBI" id="CHEBI:57684"/>
        <dbReference type="ChEBI" id="CHEBI:82766"/>
        <dbReference type="EC" id="2.4.1.332"/>
    </reaction>
</comment>
<comment type="biophysicochemical properties">
    <kinetics>
        <KM evidence="1">1.1 mM for 2-O-alpha-D-glucopyranosyl-sn-glycerol</KM>
        <KM evidence="1">0.57 mM for phosphate</KM>
        <text evidence="1">kcat is 95 sec(-1) with 2-O-alpha-D-glucopyranosyl-sn-glycerol.</text>
    </kinetics>
    <phDependence>
        <text evidence="1">Optimum pH is 6.0-8.0.</text>
    </phDependence>
</comment>
<comment type="subunit">
    <text evidence="1 2">Homodimer.</text>
</comment>
<comment type="similarity">
    <text evidence="4">Belongs to the glycosyl hydrolase 65 family.</text>
</comment>